<feature type="chain" id="PRO_0000127826" description="Uncharacterized protein AF_0085">
    <location>
        <begin position="1"/>
        <end position="141"/>
    </location>
</feature>
<feature type="transmembrane region" description="Helical" evidence="1">
    <location>
        <begin position="20"/>
        <end position="42"/>
    </location>
</feature>
<feature type="transmembrane region" description="Helical" evidence="1">
    <location>
        <begin position="52"/>
        <end position="74"/>
    </location>
</feature>
<protein>
    <recommendedName>
        <fullName>Uncharacterized protein AF_0085</fullName>
    </recommendedName>
</protein>
<evidence type="ECO:0000255" key="1"/>
<evidence type="ECO:0000305" key="2"/>
<dbReference type="EMBL" id="AE000782">
    <property type="protein sequence ID" value="AAB91146.1"/>
    <property type="molecule type" value="Genomic_DNA"/>
</dbReference>
<dbReference type="PIR" id="E69260">
    <property type="entry name" value="E69260"/>
</dbReference>
<dbReference type="STRING" id="224325.AF_0085"/>
<dbReference type="PaxDb" id="224325-AF_0085"/>
<dbReference type="EnsemblBacteria" id="AAB91146">
    <property type="protein sequence ID" value="AAB91146"/>
    <property type="gene ID" value="AF_0085"/>
</dbReference>
<dbReference type="KEGG" id="afu:AF_0085"/>
<dbReference type="HOGENOM" id="CLU_1820912_0_0_2"/>
<dbReference type="Proteomes" id="UP000002199">
    <property type="component" value="Chromosome"/>
</dbReference>
<dbReference type="GO" id="GO:0005886">
    <property type="term" value="C:plasma membrane"/>
    <property type="evidence" value="ECO:0007669"/>
    <property type="project" value="UniProtKB-SubCell"/>
</dbReference>
<organism>
    <name type="scientific">Archaeoglobus fulgidus (strain ATCC 49558 / DSM 4304 / JCM 9628 / NBRC 100126 / VC-16)</name>
    <dbReference type="NCBI Taxonomy" id="224325"/>
    <lineage>
        <taxon>Archaea</taxon>
        <taxon>Methanobacteriati</taxon>
        <taxon>Methanobacteriota</taxon>
        <taxon>Archaeoglobi</taxon>
        <taxon>Archaeoglobales</taxon>
        <taxon>Archaeoglobaceae</taxon>
        <taxon>Archaeoglobus</taxon>
    </lineage>
</organism>
<gene>
    <name type="ordered locus">AF_0085</name>
</gene>
<reference key="1">
    <citation type="journal article" date="1997" name="Nature">
        <title>The complete genome sequence of the hyperthermophilic, sulphate-reducing archaeon Archaeoglobus fulgidus.</title>
        <authorList>
            <person name="Klenk H.-P."/>
            <person name="Clayton R.A."/>
            <person name="Tomb J.-F."/>
            <person name="White O."/>
            <person name="Nelson K.E."/>
            <person name="Ketchum K.A."/>
            <person name="Dodson R.J."/>
            <person name="Gwinn M.L."/>
            <person name="Hickey E.K."/>
            <person name="Peterson J.D."/>
            <person name="Richardson D.L."/>
            <person name="Kerlavage A.R."/>
            <person name="Graham D.E."/>
            <person name="Kyrpides N.C."/>
            <person name="Fleischmann R.D."/>
            <person name="Quackenbush J."/>
            <person name="Lee N.H."/>
            <person name="Sutton G.G."/>
            <person name="Gill S.R."/>
            <person name="Kirkness E.F."/>
            <person name="Dougherty B.A."/>
            <person name="McKenney K."/>
            <person name="Adams M.D."/>
            <person name="Loftus B.J."/>
            <person name="Peterson S.N."/>
            <person name="Reich C.I."/>
            <person name="McNeil L.K."/>
            <person name="Badger J.H."/>
            <person name="Glodek A."/>
            <person name="Zhou L."/>
            <person name="Overbeek R."/>
            <person name="Gocayne J.D."/>
            <person name="Weidman J.F."/>
            <person name="McDonald L.A."/>
            <person name="Utterback T.R."/>
            <person name="Cotton M.D."/>
            <person name="Spriggs T."/>
            <person name="Artiach P."/>
            <person name="Kaine B.P."/>
            <person name="Sykes S.M."/>
            <person name="Sadow P.W."/>
            <person name="D'Andrea K.P."/>
            <person name="Bowman C."/>
            <person name="Fujii C."/>
            <person name="Garland S.A."/>
            <person name="Mason T.M."/>
            <person name="Olsen G.J."/>
            <person name="Fraser C.M."/>
            <person name="Smith H.O."/>
            <person name="Woese C.R."/>
            <person name="Venter J.C."/>
        </authorList>
    </citation>
    <scope>NUCLEOTIDE SEQUENCE [LARGE SCALE GENOMIC DNA]</scope>
    <source>
        <strain>ATCC 49558 / DSM 4304 / JCM 9628 / NBRC 100126 / VC-16</strain>
    </source>
</reference>
<sequence>MVARTIATFAGSTALTIKPFLVNLPVVICLAAYLVSQVFCLAGFCPDYLAELHLCTFFTFFTSFLLVPLAIFTLRKDGNFLRKRAVFTSYSCVYPPFRLGNPTCFYSYHWFLIHIPESLWLVNNGFGLRATCRLSSRRSQR</sequence>
<accession>O30151</accession>
<keyword id="KW-1003">Cell membrane</keyword>
<keyword id="KW-0472">Membrane</keyword>
<keyword id="KW-1185">Reference proteome</keyword>
<keyword id="KW-0812">Transmembrane</keyword>
<keyword id="KW-1133">Transmembrane helix</keyword>
<comment type="subcellular location">
    <subcellularLocation>
        <location evidence="2">Cell membrane</location>
        <topology evidence="2">Multi-pass membrane protein</topology>
    </subcellularLocation>
</comment>
<proteinExistence type="predicted"/>
<name>Y085_ARCFU</name>